<organism>
    <name type="scientific">Thermoplasma acidophilum (strain ATCC 25905 / DSM 1728 / JCM 9062 / NBRC 15155 / AMRC-C165)</name>
    <dbReference type="NCBI Taxonomy" id="273075"/>
    <lineage>
        <taxon>Archaea</taxon>
        <taxon>Methanobacteriati</taxon>
        <taxon>Thermoplasmatota</taxon>
        <taxon>Thermoplasmata</taxon>
        <taxon>Thermoplasmatales</taxon>
        <taxon>Thermoplasmataceae</taxon>
        <taxon>Thermoplasma</taxon>
    </lineage>
</organism>
<feature type="chain" id="PRO_0000141701" description="Cobalt-precorrin-5B C(1)-methyltransferase">
    <location>
        <begin position="1"/>
        <end position="364"/>
    </location>
</feature>
<evidence type="ECO:0000255" key="1">
    <source>
        <dbReference type="HAMAP-Rule" id="MF_00787"/>
    </source>
</evidence>
<sequence>MTQSNPFQQYGITSGLAAAAAAKASVLAAMGTISDYVGVPTPIGLRIEVKVEMMKQIDARSGIAAVRKFSGDNPDTLNGALFESRAVIRDDGLINIFAGEGIGVAVSDGLPVRRGDPAINPVARMMIENAVREVSGSAGFDVYISVPGGEDLARDTMNPRVGISGGISILGTTGIEEPVSGPDYEAHIEYLLQTGRCVSTVAVMCPGNTAMRFAESYLRLHPASFILTGDRIGSAIEMAIEKGYREIVVFGLPGKLVKMAAGVMNTHSRIADARFETIAAYAALNGADRDTISKILSSNTVESAFAVLRSIGLLDSVAGAIASRIVERLRSPVWQIRRILLRHDRFRRQAIRVSPVAGHIETGE</sequence>
<gene>
    <name evidence="1" type="primary">cbiD</name>
    <name type="ordered locus">Ta0656</name>
</gene>
<name>CBID_THEAC</name>
<reference key="1">
    <citation type="journal article" date="2000" name="Nature">
        <title>The genome sequence of the thermoacidophilic scavenger Thermoplasma acidophilum.</title>
        <authorList>
            <person name="Ruepp A."/>
            <person name="Graml W."/>
            <person name="Santos-Martinez M.-L."/>
            <person name="Koretke K.K."/>
            <person name="Volker C."/>
            <person name="Mewes H.-W."/>
            <person name="Frishman D."/>
            <person name="Stocker S."/>
            <person name="Lupas A.N."/>
            <person name="Baumeister W."/>
        </authorList>
    </citation>
    <scope>NUCLEOTIDE SEQUENCE [LARGE SCALE GENOMIC DNA]</scope>
    <source>
        <strain>ATCC 25905 / DSM 1728 / JCM 9062 / NBRC 15155 / AMRC-C165</strain>
    </source>
</reference>
<dbReference type="EC" id="2.1.1.195" evidence="1"/>
<dbReference type="EMBL" id="AL445065">
    <property type="protein sequence ID" value="CAC11794.1"/>
    <property type="molecule type" value="Genomic_DNA"/>
</dbReference>
<dbReference type="RefSeq" id="WP_010901078.1">
    <property type="nucleotide sequence ID" value="NC_002578.1"/>
</dbReference>
<dbReference type="SMR" id="Q9HKE5"/>
<dbReference type="FunCoup" id="Q9HKE5">
    <property type="interactions" value="56"/>
</dbReference>
<dbReference type="STRING" id="273075.gene:9571876"/>
<dbReference type="PaxDb" id="273075-Ta0656"/>
<dbReference type="EnsemblBacteria" id="CAC11794">
    <property type="protein sequence ID" value="CAC11794"/>
    <property type="gene ID" value="CAC11794"/>
</dbReference>
<dbReference type="KEGG" id="tac:Ta0656"/>
<dbReference type="eggNOG" id="arCOG04383">
    <property type="taxonomic scope" value="Archaea"/>
</dbReference>
<dbReference type="HOGENOM" id="CLU_041273_1_0_2"/>
<dbReference type="InParanoid" id="Q9HKE5"/>
<dbReference type="OrthoDB" id="57543at2157"/>
<dbReference type="UniPathway" id="UPA00148">
    <property type="reaction ID" value="UER00227"/>
</dbReference>
<dbReference type="Proteomes" id="UP000001024">
    <property type="component" value="Chromosome"/>
</dbReference>
<dbReference type="GO" id="GO:0043780">
    <property type="term" value="F:cobalt-precorrin-5B C1-methyltransferase activity"/>
    <property type="evidence" value="ECO:0007669"/>
    <property type="project" value="RHEA"/>
</dbReference>
<dbReference type="GO" id="GO:0019251">
    <property type="term" value="P:anaerobic cobalamin biosynthetic process"/>
    <property type="evidence" value="ECO:0007669"/>
    <property type="project" value="UniProtKB-UniRule"/>
</dbReference>
<dbReference type="GO" id="GO:0032259">
    <property type="term" value="P:methylation"/>
    <property type="evidence" value="ECO:0007669"/>
    <property type="project" value="UniProtKB-KW"/>
</dbReference>
<dbReference type="Gene3D" id="3.30.2110.10">
    <property type="entry name" value="CbiD-like"/>
    <property type="match status" value="1"/>
</dbReference>
<dbReference type="HAMAP" id="MF_00787">
    <property type="entry name" value="CbiD"/>
    <property type="match status" value="1"/>
</dbReference>
<dbReference type="InterPro" id="IPR002748">
    <property type="entry name" value="CbiD"/>
</dbReference>
<dbReference type="InterPro" id="IPR036074">
    <property type="entry name" value="CbiD_sf"/>
</dbReference>
<dbReference type="NCBIfam" id="TIGR00312">
    <property type="entry name" value="cbiD"/>
    <property type="match status" value="1"/>
</dbReference>
<dbReference type="PANTHER" id="PTHR35863">
    <property type="entry name" value="COBALT-PRECORRIN-5B C(1)-METHYLTRANSFERASE"/>
    <property type="match status" value="1"/>
</dbReference>
<dbReference type="PANTHER" id="PTHR35863:SF1">
    <property type="entry name" value="COBALT-PRECORRIN-5B C(1)-METHYLTRANSFERASE"/>
    <property type="match status" value="1"/>
</dbReference>
<dbReference type="Pfam" id="PF01888">
    <property type="entry name" value="CbiD"/>
    <property type="match status" value="1"/>
</dbReference>
<dbReference type="PIRSF" id="PIRSF026782">
    <property type="entry name" value="CbiD"/>
    <property type="match status" value="1"/>
</dbReference>
<dbReference type="SUPFAM" id="SSF111342">
    <property type="entry name" value="CbiD-like"/>
    <property type="match status" value="1"/>
</dbReference>
<proteinExistence type="inferred from homology"/>
<comment type="function">
    <text evidence="1">Catalyzes the methylation of C-1 in cobalt-precorrin-5B to form cobalt-precorrin-6A.</text>
</comment>
<comment type="catalytic activity">
    <reaction evidence="1">
        <text>Co-precorrin-5B + S-adenosyl-L-methionine = Co-precorrin-6A + S-adenosyl-L-homocysteine</text>
        <dbReference type="Rhea" id="RHEA:26285"/>
        <dbReference type="ChEBI" id="CHEBI:57856"/>
        <dbReference type="ChEBI" id="CHEBI:59789"/>
        <dbReference type="ChEBI" id="CHEBI:60063"/>
        <dbReference type="ChEBI" id="CHEBI:60064"/>
        <dbReference type="EC" id="2.1.1.195"/>
    </reaction>
</comment>
<comment type="pathway">
    <text evidence="1">Cofactor biosynthesis; adenosylcobalamin biosynthesis; cob(II)yrinate a,c-diamide from sirohydrochlorin (anaerobic route): step 6/10.</text>
</comment>
<comment type="similarity">
    <text evidence="1">Belongs to the CbiD family.</text>
</comment>
<accession>Q9HKE5</accession>
<protein>
    <recommendedName>
        <fullName evidence="1">Cobalt-precorrin-5B C(1)-methyltransferase</fullName>
        <ecNumber evidence="1">2.1.1.195</ecNumber>
    </recommendedName>
    <alternativeName>
        <fullName evidence="1">Cobalt-precorrin-6A synthase</fullName>
    </alternativeName>
</protein>
<keyword id="KW-0169">Cobalamin biosynthesis</keyword>
<keyword id="KW-0489">Methyltransferase</keyword>
<keyword id="KW-1185">Reference proteome</keyword>
<keyword id="KW-0949">S-adenosyl-L-methionine</keyword>
<keyword id="KW-0808">Transferase</keyword>